<organism>
    <name type="scientific">Escherichia coli O1:K1 / APEC</name>
    <dbReference type="NCBI Taxonomy" id="405955"/>
    <lineage>
        <taxon>Bacteria</taxon>
        <taxon>Pseudomonadati</taxon>
        <taxon>Pseudomonadota</taxon>
        <taxon>Gammaproteobacteria</taxon>
        <taxon>Enterobacterales</taxon>
        <taxon>Enterobacteriaceae</taxon>
        <taxon>Escherichia</taxon>
    </lineage>
</organism>
<evidence type="ECO:0000255" key="1">
    <source>
        <dbReference type="HAMAP-Rule" id="MF_01114"/>
    </source>
</evidence>
<comment type="function">
    <text evidence="1">Modulates RecA activity.</text>
</comment>
<comment type="subcellular location">
    <subcellularLocation>
        <location evidence="1">Cytoplasm</location>
    </subcellularLocation>
</comment>
<comment type="similarity">
    <text evidence="1">Belongs to the RecX family.</text>
</comment>
<sequence>MTESTSRRPAYARLLDRAVRILAVRDHSEQELRRKLAAPIMGKNGPEEIDATAEDYERVIAWCHEHGYLDDSRFVARFIASRSRKGYGPARIRQELNQKGISREATEKAMRECDIDWCALARDQATRKYGEPLPTVFSEKVKIQRFLLYRGYLMEDIQDIWRNFAD</sequence>
<keyword id="KW-0963">Cytoplasm</keyword>
<keyword id="KW-1185">Reference proteome</keyword>
<protein>
    <recommendedName>
        <fullName evidence="1">Regulatory protein RecX</fullName>
    </recommendedName>
</protein>
<proteinExistence type="inferred from homology"/>
<reference key="1">
    <citation type="journal article" date="2007" name="J. Bacteriol.">
        <title>The genome sequence of avian pathogenic Escherichia coli strain O1:K1:H7 shares strong similarities with human extraintestinal pathogenic E. coli genomes.</title>
        <authorList>
            <person name="Johnson T.J."/>
            <person name="Kariyawasam S."/>
            <person name="Wannemuehler Y."/>
            <person name="Mangiamele P."/>
            <person name="Johnson S.J."/>
            <person name="Doetkott C."/>
            <person name="Skyberg J.A."/>
            <person name="Lynne A.M."/>
            <person name="Johnson J.R."/>
            <person name="Nolan L.K."/>
        </authorList>
    </citation>
    <scope>NUCLEOTIDE SEQUENCE [LARGE SCALE GENOMIC DNA]</scope>
</reference>
<feature type="chain" id="PRO_1000065167" description="Regulatory protein RecX">
    <location>
        <begin position="1"/>
        <end position="166"/>
    </location>
</feature>
<dbReference type="EMBL" id="CP000468">
    <property type="protein sequence ID" value="ABJ02128.1"/>
    <property type="molecule type" value="Genomic_DNA"/>
</dbReference>
<dbReference type="RefSeq" id="WP_000140506.1">
    <property type="nucleotide sequence ID" value="NZ_CADILS010000020.1"/>
</dbReference>
<dbReference type="SMR" id="A1AEN8"/>
<dbReference type="GeneID" id="75172780"/>
<dbReference type="KEGG" id="ecv:APECO1_3828"/>
<dbReference type="HOGENOM" id="CLU_066607_3_2_6"/>
<dbReference type="Proteomes" id="UP000008216">
    <property type="component" value="Chromosome"/>
</dbReference>
<dbReference type="GO" id="GO:0005737">
    <property type="term" value="C:cytoplasm"/>
    <property type="evidence" value="ECO:0007669"/>
    <property type="project" value="UniProtKB-SubCell"/>
</dbReference>
<dbReference type="GO" id="GO:0006282">
    <property type="term" value="P:regulation of DNA repair"/>
    <property type="evidence" value="ECO:0007669"/>
    <property type="project" value="UniProtKB-UniRule"/>
</dbReference>
<dbReference type="FunFam" id="1.10.10.10:FF:000133">
    <property type="entry name" value="Regulatory protein RecX"/>
    <property type="match status" value="1"/>
</dbReference>
<dbReference type="FunFam" id="1.10.10.10:FF:000134">
    <property type="entry name" value="Regulatory protein RecX"/>
    <property type="match status" value="1"/>
</dbReference>
<dbReference type="FunFam" id="1.10.10.10:FF:000209">
    <property type="entry name" value="Regulatory protein RecX"/>
    <property type="match status" value="1"/>
</dbReference>
<dbReference type="Gene3D" id="1.10.10.10">
    <property type="entry name" value="Winged helix-like DNA-binding domain superfamily/Winged helix DNA-binding domain"/>
    <property type="match status" value="3"/>
</dbReference>
<dbReference type="HAMAP" id="MF_01114">
    <property type="entry name" value="RecX"/>
    <property type="match status" value="1"/>
</dbReference>
<dbReference type="InterPro" id="IPR053926">
    <property type="entry name" value="RecX_HTH_1st"/>
</dbReference>
<dbReference type="InterPro" id="IPR053924">
    <property type="entry name" value="RecX_HTH_2nd"/>
</dbReference>
<dbReference type="InterPro" id="IPR053925">
    <property type="entry name" value="RecX_HTH_3rd"/>
</dbReference>
<dbReference type="InterPro" id="IPR003783">
    <property type="entry name" value="Regulatory_RecX"/>
</dbReference>
<dbReference type="InterPro" id="IPR036388">
    <property type="entry name" value="WH-like_DNA-bd_sf"/>
</dbReference>
<dbReference type="NCBIfam" id="NF001052">
    <property type="entry name" value="PRK00117.1-1"/>
    <property type="match status" value="1"/>
</dbReference>
<dbReference type="PANTHER" id="PTHR33602">
    <property type="entry name" value="REGULATORY PROTEIN RECX FAMILY PROTEIN"/>
    <property type="match status" value="1"/>
</dbReference>
<dbReference type="PANTHER" id="PTHR33602:SF1">
    <property type="entry name" value="REGULATORY PROTEIN RECX FAMILY PROTEIN"/>
    <property type="match status" value="1"/>
</dbReference>
<dbReference type="Pfam" id="PF21982">
    <property type="entry name" value="RecX_HTH1"/>
    <property type="match status" value="1"/>
</dbReference>
<dbReference type="Pfam" id="PF02631">
    <property type="entry name" value="RecX_HTH2"/>
    <property type="match status" value="1"/>
</dbReference>
<dbReference type="Pfam" id="PF21981">
    <property type="entry name" value="RecX_HTH3"/>
    <property type="match status" value="1"/>
</dbReference>
<accession>A1AEN8</accession>
<gene>
    <name evidence="1" type="primary">recX</name>
    <name type="ordered locus">Ecok1_26340</name>
    <name type="ORF">APECO1_3828</name>
</gene>
<name>RECX_ECOK1</name>